<comment type="function">
    <text evidence="1 2 3 4 6">DNA-dependent ATPase and 3'-5' DNA helicase that may be involved in repair of stalled replication forks. Helicase with 3'-to 5'- polarity; able to unwind over 100 bp of DNA at 50 degrees Celsius. Unwinds forked DNA, preferentially on lagging strand forks; has weaker activity on Holliday junctions. Displaces the invading strand in DNA D-loops. Unwinds short oligonucleotides from dsDNA with 3'- but not blunt ends or 5'-ssDNA tails in an ATP-dependent manner. ATPase activity is stimulated by ssDNA but not dsDNA, protein binds ssDNA, dsDNA with 5'- or 3'-overhangs but not blunt ended dsDNA and replication forks. Replication forks bind both this protein and RPA. RPA does not stimulate the helicase activity of this protein.</text>
</comment>
<comment type="catalytic activity">
    <reaction evidence="1 2 3 6">
        <text>Couples ATP hydrolysis with the unwinding of duplex DNA by translocating in the 3'-5' direction.</text>
        <dbReference type="EC" id="5.6.2.4"/>
    </reaction>
</comment>
<comment type="catalytic activity">
    <reaction evidence="1 2 3 6">
        <text>ATP + H2O = ADP + phosphate + H(+)</text>
        <dbReference type="Rhea" id="RHEA:13065"/>
        <dbReference type="ChEBI" id="CHEBI:15377"/>
        <dbReference type="ChEBI" id="CHEBI:15378"/>
        <dbReference type="ChEBI" id="CHEBI:30616"/>
        <dbReference type="ChEBI" id="CHEBI:43474"/>
        <dbReference type="ChEBI" id="CHEBI:456216"/>
        <dbReference type="EC" id="5.6.2.4"/>
    </reaction>
</comment>
<comment type="subunit">
    <text evidence="1 5">Monomer (By similarity). Binds replication protein A (RPA), in presence and absence of DNA.</text>
</comment>
<comment type="domain">
    <text evidence="3 5">The C-terminal region (about 633-690) acts as a brake for ATP hydrolysis (PubMed:17991488) and interacts with RPA (PubMed:21195035).</text>
</comment>
<comment type="similarity">
    <text evidence="1">Belongs to the helicase family. Hel308 subfamily.</text>
</comment>
<organism>
    <name type="scientific">Methanothermobacter thermautotrophicus (strain ATCC 29096 / DSM 1053 / JCM 10044 / NBRC 100330 / Delta H)</name>
    <name type="common">Methanobacterium thermoautotrophicum</name>
    <dbReference type="NCBI Taxonomy" id="187420"/>
    <lineage>
        <taxon>Archaea</taxon>
        <taxon>Methanobacteriati</taxon>
        <taxon>Methanobacteriota</taxon>
        <taxon>Methanomada group</taxon>
        <taxon>Methanobacteria</taxon>
        <taxon>Methanobacteriales</taxon>
        <taxon>Methanobacteriaceae</taxon>
        <taxon>Methanothermobacter</taxon>
    </lineage>
</organism>
<evidence type="ECO:0000255" key="1">
    <source>
        <dbReference type="HAMAP-Rule" id="MF_00442"/>
    </source>
</evidence>
<evidence type="ECO:0000269" key="2">
    <source>
    </source>
</evidence>
<evidence type="ECO:0000269" key="3">
    <source>
    </source>
</evidence>
<evidence type="ECO:0000269" key="4">
    <source>
    </source>
</evidence>
<evidence type="ECO:0000269" key="5">
    <source>
    </source>
</evidence>
<evidence type="ECO:0000269" key="6">
    <source>
    </source>
</evidence>
<dbReference type="EC" id="5.6.2.4" evidence="1 2 3"/>
<dbReference type="EMBL" id="AE000666">
    <property type="protein sequence ID" value="AAB85310.1"/>
    <property type="molecule type" value="Genomic_DNA"/>
</dbReference>
<dbReference type="PIR" id="C69208">
    <property type="entry name" value="C69208"/>
</dbReference>
<dbReference type="RefSeq" id="WP_010876445.1">
    <property type="nucleotide sequence ID" value="NC_000916.1"/>
</dbReference>
<dbReference type="SMR" id="O26901"/>
<dbReference type="FunCoup" id="O26901">
    <property type="interactions" value="67"/>
</dbReference>
<dbReference type="STRING" id="187420.MTH_810"/>
<dbReference type="PaxDb" id="187420-MTH_810"/>
<dbReference type="EnsemblBacteria" id="AAB85310">
    <property type="protein sequence ID" value="AAB85310"/>
    <property type="gene ID" value="MTH_810"/>
</dbReference>
<dbReference type="GeneID" id="1471218"/>
<dbReference type="GeneID" id="77401345"/>
<dbReference type="KEGG" id="mth:MTH_810"/>
<dbReference type="PATRIC" id="fig|187420.15.peg.795"/>
<dbReference type="HOGENOM" id="CLU_006553_3_0_2"/>
<dbReference type="InParanoid" id="O26901"/>
<dbReference type="Proteomes" id="UP000005223">
    <property type="component" value="Chromosome"/>
</dbReference>
<dbReference type="GO" id="GO:0043138">
    <property type="term" value="F:3'-5' DNA helicase activity"/>
    <property type="evidence" value="ECO:0000314"/>
    <property type="project" value="UniProtKB"/>
</dbReference>
<dbReference type="GO" id="GO:0005524">
    <property type="term" value="F:ATP binding"/>
    <property type="evidence" value="ECO:0007669"/>
    <property type="project" value="UniProtKB-UniRule"/>
</dbReference>
<dbReference type="GO" id="GO:0016887">
    <property type="term" value="F:ATP hydrolysis activity"/>
    <property type="evidence" value="ECO:0007669"/>
    <property type="project" value="RHEA"/>
</dbReference>
<dbReference type="GO" id="GO:0003677">
    <property type="term" value="F:DNA binding"/>
    <property type="evidence" value="ECO:0007669"/>
    <property type="project" value="UniProtKB-UniRule"/>
</dbReference>
<dbReference type="GO" id="GO:0006281">
    <property type="term" value="P:DNA repair"/>
    <property type="evidence" value="ECO:0007669"/>
    <property type="project" value="UniProtKB-UniRule"/>
</dbReference>
<dbReference type="CDD" id="cd18795">
    <property type="entry name" value="SF2_C_Ski2"/>
    <property type="match status" value="1"/>
</dbReference>
<dbReference type="Gene3D" id="1.10.3380.30">
    <property type="match status" value="1"/>
</dbReference>
<dbReference type="Gene3D" id="1.10.150.20">
    <property type="entry name" value="5' to 3' exonuclease, C-terminal subdomain"/>
    <property type="match status" value="1"/>
</dbReference>
<dbReference type="Gene3D" id="3.40.50.300">
    <property type="entry name" value="P-loop containing nucleotide triphosphate hydrolases"/>
    <property type="match status" value="2"/>
</dbReference>
<dbReference type="HAMAP" id="MF_00442">
    <property type="entry name" value="Helicase_Hel308"/>
    <property type="match status" value="1"/>
</dbReference>
<dbReference type="InterPro" id="IPR011545">
    <property type="entry name" value="DEAD/DEAH_box_helicase_dom"/>
</dbReference>
<dbReference type="InterPro" id="IPR041663">
    <property type="entry name" value="DisA/LigA_HHH"/>
</dbReference>
<dbReference type="InterPro" id="IPR048772">
    <property type="entry name" value="Hel308-like_dom4"/>
</dbReference>
<dbReference type="InterPro" id="IPR050474">
    <property type="entry name" value="Hel308_SKI2-like"/>
</dbReference>
<dbReference type="InterPro" id="IPR014001">
    <property type="entry name" value="Helicase_ATP-bd"/>
</dbReference>
<dbReference type="InterPro" id="IPR001650">
    <property type="entry name" value="Helicase_C-like"/>
</dbReference>
<dbReference type="InterPro" id="IPR022965">
    <property type="entry name" value="Helicase_Hel308"/>
</dbReference>
<dbReference type="InterPro" id="IPR003583">
    <property type="entry name" value="Hlx-hairpin-Hlx_DNA-bd_motif"/>
</dbReference>
<dbReference type="InterPro" id="IPR027417">
    <property type="entry name" value="P-loop_NTPase"/>
</dbReference>
<dbReference type="InterPro" id="IPR036390">
    <property type="entry name" value="WH_DNA-bd_sf"/>
</dbReference>
<dbReference type="PANTHER" id="PTHR47961:SF10">
    <property type="entry name" value="ATP-DEPENDENT DNA HELICASE HEL308"/>
    <property type="match status" value="1"/>
</dbReference>
<dbReference type="PANTHER" id="PTHR47961">
    <property type="entry name" value="DNA POLYMERASE THETA, PUTATIVE (AFU_ORTHOLOGUE AFUA_1G05260)-RELATED"/>
    <property type="match status" value="1"/>
</dbReference>
<dbReference type="Pfam" id="PF00270">
    <property type="entry name" value="DEAD"/>
    <property type="match status" value="1"/>
</dbReference>
<dbReference type="Pfam" id="PF00271">
    <property type="entry name" value="Helicase_C"/>
    <property type="match status" value="1"/>
</dbReference>
<dbReference type="Pfam" id="PF21280">
    <property type="entry name" value="Helicase_dom4_arc"/>
    <property type="match status" value="1"/>
</dbReference>
<dbReference type="Pfam" id="PF12826">
    <property type="entry name" value="HHH_2"/>
    <property type="match status" value="1"/>
</dbReference>
<dbReference type="SMART" id="SM00487">
    <property type="entry name" value="DEXDc"/>
    <property type="match status" value="1"/>
</dbReference>
<dbReference type="SMART" id="SM00490">
    <property type="entry name" value="HELICc"/>
    <property type="match status" value="1"/>
</dbReference>
<dbReference type="SMART" id="SM00278">
    <property type="entry name" value="HhH1"/>
    <property type="match status" value="2"/>
</dbReference>
<dbReference type="SUPFAM" id="SSF52540">
    <property type="entry name" value="P-loop containing nucleoside triphosphate hydrolases"/>
    <property type="match status" value="1"/>
</dbReference>
<dbReference type="SUPFAM" id="SSF158702">
    <property type="entry name" value="Sec63 N-terminal domain-like"/>
    <property type="match status" value="1"/>
</dbReference>
<dbReference type="SUPFAM" id="SSF46785">
    <property type="entry name" value="Winged helix' DNA-binding domain"/>
    <property type="match status" value="1"/>
</dbReference>
<dbReference type="PROSITE" id="PS51192">
    <property type="entry name" value="HELICASE_ATP_BIND_1"/>
    <property type="match status" value="1"/>
</dbReference>
<dbReference type="PROSITE" id="PS51194">
    <property type="entry name" value="HELICASE_CTER"/>
    <property type="match status" value="1"/>
</dbReference>
<sequence length="690" mass="78510">MKSLPPEMRQILGDCYPHIRELNPAQRSAIEAGYLESEDNYIIAIPTASGKTLLGIIAALKTVMEGGRVIYTVPLLSIQNEKIKEFRKLEEHGIRVGKDPRTSDIAVMVFESFDSLTRFSWNILREVDLLIVDEFHMIGEYTRGPVIESAITRARTLNPSVRIVALSATLSNMDEIAGWLDARVVEHDYRPVPLHREVLDTEMFGVREKNDVVLKVLERSLEDGSQTLAFVSTRRFTESLASHLADKISGKIPDDMVESFREVAGKVLEVPKSRGSPPTSTCLKLAECLEAGIAFHHAGLFNRQREIIEDEFRDGNILMITATPSLMYGVNLPSRTVVIRDYTRWTSQGPRRIPVFDYEQMSGRAGRPQYDDAGYSYLIARSHDEAMDLEEYYIRGEVERTTSRIIENRDALYRQIIAQVASGLSGTTEELADFFRNTFYGYQMVEGPFSDSFGMDSIQYEVENATEYLMRNRILYPGPEGFSATEFGLLIAKSNYSVETAIKLHQFASEMDEMDIYRLIYEITRTPDMPLISFKGRKSRDPVRDKLMEHGLFLMDVGNEEATAAALIEWINERTEYEIENAFHVYAASTRRSAYEASKIVKFFGKICEIMGVYRHSSQLEILSARLYYGVKEDAIPLVVGVRGLGRVRARKIIKTFGEDLRHVREDELKRIDGIGPKMAGAIRRYCERF</sequence>
<protein>
    <recommendedName>
        <fullName evidence="1">ATP-dependent DNA helicase Hel308</fullName>
        <ecNumber evidence="1 2 3">5.6.2.4</ecNumber>
    </recommendedName>
    <alternativeName>
        <fullName evidence="1">DNA 3'-5' helicase Hel308</fullName>
    </alternativeName>
</protein>
<feature type="chain" id="PRO_0000102108" description="ATP-dependent DNA helicase Hel308">
    <location>
        <begin position="1"/>
        <end position="690"/>
    </location>
</feature>
<feature type="domain" description="Helicase ATP-binding" evidence="1">
    <location>
        <begin position="32"/>
        <end position="188"/>
    </location>
</feature>
<feature type="domain" description="Helicase C-terminal" evidence="1">
    <location>
        <begin position="208"/>
        <end position="417"/>
    </location>
</feature>
<feature type="short sequence motif" description="DEAH box" evidence="1">
    <location>
        <begin position="133"/>
        <end position="136"/>
    </location>
</feature>
<feature type="binding site" evidence="1">
    <location>
        <position position="26"/>
    </location>
    <ligand>
        <name>ATP</name>
        <dbReference type="ChEBI" id="CHEBI:30616"/>
    </ligand>
</feature>
<feature type="binding site" evidence="1">
    <location>
        <begin position="45"/>
        <end position="52"/>
    </location>
    <ligand>
        <name>ATP</name>
        <dbReference type="ChEBI" id="CHEBI:30616"/>
    </ligand>
</feature>
<feature type="mutagenesis site" description="No helicase activity, 6% ATPase activity. Binds fork DNA as well as wild-type; also supershifts with RFA." evidence="2 5 6">
    <original>K</original>
    <variation>L</variation>
    <location>
        <position position="51"/>
    </location>
</feature>
<feature type="mutagenesis site" description="Strongly reduced ATPase and helicase activity." evidence="6">
    <original>F</original>
    <variation>A</variation>
    <location>
        <position position="434"/>
    </location>
</feature>
<feature type="mutagenesis site" description="Reduced ATPase and helicase activity." evidence="6">
    <original>F</original>
    <variation>V</variation>
    <location>
        <position position="439"/>
    </location>
</feature>
<feature type="mutagenesis site" description="Reduced duplex DNA-binding and unwinding activity, without affecting single-stranded DNA-binding." evidence="6">
    <original>QYEVEN</original>
    <variation>GAEVEG</variation>
    <location>
        <begin position="459"/>
        <end position="464"/>
    </location>
</feature>
<feature type="mutagenesis site" description="Reduced duplex DNA-binding and unwinding activity, without affecting single-stranded DNA-binding." evidence="6">
    <original>Y</original>
    <variation>A</variation>
    <location>
        <position position="460"/>
    </location>
</feature>
<feature type="mutagenesis site" description="No change in DNA-binding to replication forks. Basal ATPase 4-5 fold higher than wild-type, ssDNA stimulation is less effective than wild-type. Almost no helicase activity. Binds RPA." evidence="3 5">
    <original>R</original>
    <variation>A</variation>
    <location>
        <position position="647"/>
    </location>
</feature>
<feature type="mutagenesis site" description="Decreased DNA-binding to replication forks, decreased ssDNA-stimulated ATPase. Decreased helicase activity. No binding to RPA." evidence="3 5">
    <original>R</original>
    <variation>A</variation>
    <location>
        <position position="649"/>
    </location>
</feature>
<feature type="mutagenesis site" description="No change in DNA-binding to replication forks. Decreased ssDNA stimulation of ATPase. Almost no helicase activity. Binds RPA." evidence="3 5">
    <original>R</original>
    <variation>A</variation>
    <location>
        <position position="651"/>
    </location>
</feature>
<reference key="1">
    <citation type="journal article" date="1997" name="J. Bacteriol.">
        <title>Complete genome sequence of Methanobacterium thermoautotrophicum deltaH: functional analysis and comparative genomics.</title>
        <authorList>
            <person name="Smith D.R."/>
            <person name="Doucette-Stamm L.A."/>
            <person name="Deloughery C."/>
            <person name="Lee H.-M."/>
            <person name="Dubois J."/>
            <person name="Aldredge T."/>
            <person name="Bashirzadeh R."/>
            <person name="Blakely D."/>
            <person name="Cook R."/>
            <person name="Gilbert K."/>
            <person name="Harrison D."/>
            <person name="Hoang L."/>
            <person name="Keagle P."/>
            <person name="Lumm W."/>
            <person name="Pothier B."/>
            <person name="Qiu D."/>
            <person name="Spadafora R."/>
            <person name="Vicare R."/>
            <person name="Wang Y."/>
            <person name="Wierzbowski J."/>
            <person name="Gibson R."/>
            <person name="Jiwani N."/>
            <person name="Caruso A."/>
            <person name="Bush D."/>
            <person name="Safer H."/>
            <person name="Patwell D."/>
            <person name="Prabhakar S."/>
            <person name="McDougall S."/>
            <person name="Shimer G."/>
            <person name="Goyal A."/>
            <person name="Pietrovski S."/>
            <person name="Church G.M."/>
            <person name="Daniels C.J."/>
            <person name="Mao J.-I."/>
            <person name="Rice P."/>
            <person name="Noelling J."/>
            <person name="Reeve J.N."/>
        </authorList>
    </citation>
    <scope>NUCLEOTIDE SEQUENCE [LARGE SCALE GENOMIC DNA]</scope>
    <source>
        <strain>ATCC 29096 / DSM 1053 / JCM 10044 / NBRC 100330 / Delta H</strain>
    </source>
</reference>
<reference key="2">
    <citation type="journal article" date="2005" name="Nucleic Acids Res.">
        <title>Archaeal Hel308 helicase targets replication forks in vivo and in vitro and unwinds lagging strands.</title>
        <authorList>
            <person name="Guy C.P."/>
            <person name="Bolt E.L."/>
        </authorList>
    </citation>
    <scope>FUNCTION AS A HELICASE</scope>
    <scope>FUNCTION AS AN ATPASE</scope>
    <scope>CATALYTIC ACTIVITY</scope>
    <scope>SUBSTRATE</scope>
    <scope>DNA-BINDING</scope>
    <scope>MUTAGENESIS OF LYS-51</scope>
    <source>
        <strain>ATCC 29096 / DSM 1053 / JCM 10044 / NBRC 100330 / Delta H</strain>
    </source>
</reference>
<reference key="3">
    <citation type="journal article" date="2007" name="J. Mol. Biol.">
        <title>Archaeal Hel308 domain V couples DNA binding to ATP hydrolysis and positions DNA for unwinding over the helicase ratchet.</title>
        <authorList>
            <person name="Woodman I.L."/>
            <person name="Briggs G.S."/>
            <person name="Bolt E.L."/>
        </authorList>
    </citation>
    <scope>FUNCTION AS A HELICASE</scope>
    <scope>FUNCTION AS AN ATPASE</scope>
    <scope>CATALYTIC ACTIVITY</scope>
    <scope>DNA-BINDING</scope>
    <scope>DOMAIN</scope>
    <scope>MUTAGENESIS OF ARG-647; ARG-649 AND ARG-651</scope>
</reference>
<reference key="4">
    <citation type="journal article" date="2009" name="Biochem. Soc. Trans.">
        <title>Molecular biology of Hel308 helicase in archaea.</title>
        <authorList>
            <person name="Woodman I.L."/>
            <person name="Bolt E.L."/>
        </authorList>
    </citation>
    <scope>FUNCTION</scope>
    <scope>REVIEW</scope>
</reference>
<reference key="5">
    <citation type="journal article" date="2011" name="DNA Repair">
        <title>Physical interaction between archaeal DNA repair helicase Hel308 and replication protein A (RPA).</title>
        <authorList>
            <person name="Woodman I.L."/>
            <person name="Brammer K."/>
            <person name="Bolt E.L."/>
        </authorList>
    </citation>
    <scope>INTERACTION WITH RPA</scope>
    <scope>SUBUNIT</scope>
    <scope>DNA-BINDING</scope>
    <scope>MUTAGENESIS OF LYS-51; ARG-647; ARG-649 AND ARG-651</scope>
</reference>
<reference key="6">
    <citation type="journal article" date="2017" name="DNA Repair">
        <title>DNA binding and unwinding by Hel308 helicase requires dual functions of a winged helix domain.</title>
        <authorList>
            <person name="Northall S.J."/>
            <person name="Buckley R."/>
            <person name="Jones N."/>
            <person name="Penedo J.C."/>
            <person name="Soultanas P."/>
            <person name="Bolt E.L."/>
        </authorList>
    </citation>
    <scope>FUNCTION</scope>
    <scope>CATALYTIC ACTIVITY</scope>
    <scope>MUTAGENESIS OF LYS-51; PHE-434; PHE-439; 459-GLN--ASN-464 AND TYR-460</scope>
</reference>
<accession>O26901</accession>
<proteinExistence type="evidence at protein level"/>
<keyword id="KW-0067">ATP-binding</keyword>
<keyword id="KW-0227">DNA damage</keyword>
<keyword id="KW-0234">DNA repair</keyword>
<keyword id="KW-0238">DNA-binding</keyword>
<keyword id="KW-0347">Helicase</keyword>
<keyword id="KW-0378">Hydrolase</keyword>
<keyword id="KW-0413">Isomerase</keyword>
<keyword id="KW-0547">Nucleotide-binding</keyword>
<keyword id="KW-1185">Reference proteome</keyword>
<gene>
    <name evidence="1" type="primary">hel308</name>
    <name type="ordered locus">MTH_810</name>
</gene>
<name>HELS_METTH</name>